<reference key="1">
    <citation type="journal article" date="2005" name="PLoS Genet.">
        <title>Life in hot carbon monoxide: the complete genome sequence of Carboxydothermus hydrogenoformans Z-2901.</title>
        <authorList>
            <person name="Wu M."/>
            <person name="Ren Q."/>
            <person name="Durkin A.S."/>
            <person name="Daugherty S.C."/>
            <person name="Brinkac L.M."/>
            <person name="Dodson R.J."/>
            <person name="Madupu R."/>
            <person name="Sullivan S.A."/>
            <person name="Kolonay J.F."/>
            <person name="Nelson W.C."/>
            <person name="Tallon L.J."/>
            <person name="Jones K.M."/>
            <person name="Ulrich L.E."/>
            <person name="Gonzalez J.M."/>
            <person name="Zhulin I.B."/>
            <person name="Robb F.T."/>
            <person name="Eisen J.A."/>
        </authorList>
    </citation>
    <scope>NUCLEOTIDE SEQUENCE [LARGE SCALE GENOMIC DNA]</scope>
    <source>
        <strain>ATCC BAA-161 / DSM 6008 / Z-2901</strain>
    </source>
</reference>
<proteinExistence type="inferred from homology"/>
<comment type="function">
    <text evidence="1">Catalyzes the decarboxylation of orotidine 5'-monophosphate (OMP) to uridine 5'-monophosphate (UMP).</text>
</comment>
<comment type="catalytic activity">
    <reaction evidence="1">
        <text>orotidine 5'-phosphate + H(+) = UMP + CO2</text>
        <dbReference type="Rhea" id="RHEA:11596"/>
        <dbReference type="ChEBI" id="CHEBI:15378"/>
        <dbReference type="ChEBI" id="CHEBI:16526"/>
        <dbReference type="ChEBI" id="CHEBI:57538"/>
        <dbReference type="ChEBI" id="CHEBI:57865"/>
        <dbReference type="EC" id="4.1.1.23"/>
    </reaction>
</comment>
<comment type="pathway">
    <text evidence="1">Pyrimidine metabolism; UMP biosynthesis via de novo pathway; UMP from orotate: step 2/2.</text>
</comment>
<comment type="subunit">
    <text evidence="1">Homodimer.</text>
</comment>
<comment type="similarity">
    <text evidence="1">Belongs to the OMP decarboxylase family. Type 1 subfamily.</text>
</comment>
<dbReference type="EC" id="4.1.1.23" evidence="1"/>
<dbReference type="EMBL" id="CP000141">
    <property type="protein sequence ID" value="ABB16044.1"/>
    <property type="molecule type" value="Genomic_DNA"/>
</dbReference>
<dbReference type="RefSeq" id="WP_011344403.1">
    <property type="nucleotide sequence ID" value="NC_007503.1"/>
</dbReference>
<dbReference type="SMR" id="Q3AC06"/>
<dbReference type="FunCoup" id="Q3AC06">
    <property type="interactions" value="176"/>
</dbReference>
<dbReference type="STRING" id="246194.CHY_1496"/>
<dbReference type="KEGG" id="chy:CHY_1496"/>
<dbReference type="eggNOG" id="COG0284">
    <property type="taxonomic scope" value="Bacteria"/>
</dbReference>
<dbReference type="HOGENOM" id="CLU_067069_0_0_9"/>
<dbReference type="InParanoid" id="Q3AC06"/>
<dbReference type="OrthoDB" id="9806203at2"/>
<dbReference type="UniPathway" id="UPA00070">
    <property type="reaction ID" value="UER00120"/>
</dbReference>
<dbReference type="Proteomes" id="UP000002706">
    <property type="component" value="Chromosome"/>
</dbReference>
<dbReference type="GO" id="GO:0005829">
    <property type="term" value="C:cytosol"/>
    <property type="evidence" value="ECO:0007669"/>
    <property type="project" value="TreeGrafter"/>
</dbReference>
<dbReference type="GO" id="GO:0004590">
    <property type="term" value="F:orotidine-5'-phosphate decarboxylase activity"/>
    <property type="evidence" value="ECO:0007669"/>
    <property type="project" value="UniProtKB-UniRule"/>
</dbReference>
<dbReference type="GO" id="GO:0006207">
    <property type="term" value="P:'de novo' pyrimidine nucleobase biosynthetic process"/>
    <property type="evidence" value="ECO:0007669"/>
    <property type="project" value="InterPro"/>
</dbReference>
<dbReference type="GO" id="GO:0044205">
    <property type="term" value="P:'de novo' UMP biosynthetic process"/>
    <property type="evidence" value="ECO:0007669"/>
    <property type="project" value="UniProtKB-UniRule"/>
</dbReference>
<dbReference type="CDD" id="cd04725">
    <property type="entry name" value="OMP_decarboxylase_like"/>
    <property type="match status" value="1"/>
</dbReference>
<dbReference type="FunFam" id="3.20.20.70:FF:000015">
    <property type="entry name" value="Orotidine 5'-phosphate decarboxylase"/>
    <property type="match status" value="1"/>
</dbReference>
<dbReference type="Gene3D" id="3.20.20.70">
    <property type="entry name" value="Aldolase class I"/>
    <property type="match status" value="1"/>
</dbReference>
<dbReference type="HAMAP" id="MF_01200_B">
    <property type="entry name" value="OMPdecase_type1_B"/>
    <property type="match status" value="1"/>
</dbReference>
<dbReference type="InterPro" id="IPR013785">
    <property type="entry name" value="Aldolase_TIM"/>
</dbReference>
<dbReference type="InterPro" id="IPR014732">
    <property type="entry name" value="OMPdecase"/>
</dbReference>
<dbReference type="InterPro" id="IPR018089">
    <property type="entry name" value="OMPdecase_AS"/>
</dbReference>
<dbReference type="InterPro" id="IPR047596">
    <property type="entry name" value="OMPdecase_bac"/>
</dbReference>
<dbReference type="InterPro" id="IPR001754">
    <property type="entry name" value="OMPdeCOase_dom"/>
</dbReference>
<dbReference type="InterPro" id="IPR011060">
    <property type="entry name" value="RibuloseP-bd_barrel"/>
</dbReference>
<dbReference type="NCBIfam" id="NF001273">
    <property type="entry name" value="PRK00230.1"/>
    <property type="match status" value="1"/>
</dbReference>
<dbReference type="NCBIfam" id="TIGR01740">
    <property type="entry name" value="pyrF"/>
    <property type="match status" value="1"/>
</dbReference>
<dbReference type="PANTHER" id="PTHR32119">
    <property type="entry name" value="OROTIDINE 5'-PHOSPHATE DECARBOXYLASE"/>
    <property type="match status" value="1"/>
</dbReference>
<dbReference type="PANTHER" id="PTHR32119:SF2">
    <property type="entry name" value="OROTIDINE 5'-PHOSPHATE DECARBOXYLASE"/>
    <property type="match status" value="1"/>
</dbReference>
<dbReference type="Pfam" id="PF00215">
    <property type="entry name" value="OMPdecase"/>
    <property type="match status" value="1"/>
</dbReference>
<dbReference type="SMART" id="SM00934">
    <property type="entry name" value="OMPdecase"/>
    <property type="match status" value="1"/>
</dbReference>
<dbReference type="SUPFAM" id="SSF51366">
    <property type="entry name" value="Ribulose-phoshate binding barrel"/>
    <property type="match status" value="1"/>
</dbReference>
<dbReference type="PROSITE" id="PS00156">
    <property type="entry name" value="OMPDECASE"/>
    <property type="match status" value="1"/>
</dbReference>
<protein>
    <recommendedName>
        <fullName evidence="1">Orotidine 5'-phosphate decarboxylase</fullName>
        <ecNumber evidence="1">4.1.1.23</ecNumber>
    </recommendedName>
    <alternativeName>
        <fullName evidence="1">OMP decarboxylase</fullName>
        <shortName evidence="1">OMPDCase</shortName>
        <shortName evidence="1">OMPdecase</shortName>
    </alternativeName>
</protein>
<feature type="chain" id="PRO_0000241852" description="Orotidine 5'-phosphate decarboxylase">
    <location>
        <begin position="1"/>
        <end position="240"/>
    </location>
</feature>
<feature type="active site" description="Proton donor" evidence="1">
    <location>
        <position position="61"/>
    </location>
</feature>
<feature type="binding site" evidence="1">
    <location>
        <position position="10"/>
    </location>
    <ligand>
        <name>substrate</name>
    </ligand>
</feature>
<feature type="binding site" evidence="1">
    <location>
        <position position="32"/>
    </location>
    <ligand>
        <name>substrate</name>
    </ligand>
</feature>
<feature type="binding site" evidence="1">
    <location>
        <begin position="59"/>
        <end position="68"/>
    </location>
    <ligand>
        <name>substrate</name>
    </ligand>
</feature>
<feature type="binding site" evidence="1">
    <location>
        <position position="122"/>
    </location>
    <ligand>
        <name>substrate</name>
    </ligand>
</feature>
<feature type="binding site" evidence="1">
    <location>
        <position position="183"/>
    </location>
    <ligand>
        <name>substrate</name>
    </ligand>
</feature>
<feature type="binding site" evidence="1">
    <location>
        <position position="192"/>
    </location>
    <ligand>
        <name>substrate</name>
    </ligand>
</feature>
<feature type="binding site" evidence="1">
    <location>
        <position position="212"/>
    </location>
    <ligand>
        <name>substrate</name>
    </ligand>
</feature>
<feature type="binding site" evidence="1">
    <location>
        <position position="213"/>
    </location>
    <ligand>
        <name>substrate</name>
    </ligand>
</feature>
<organism>
    <name type="scientific">Carboxydothermus hydrogenoformans (strain ATCC BAA-161 / DSM 6008 / Z-2901)</name>
    <dbReference type="NCBI Taxonomy" id="246194"/>
    <lineage>
        <taxon>Bacteria</taxon>
        <taxon>Bacillati</taxon>
        <taxon>Bacillota</taxon>
        <taxon>Clostridia</taxon>
        <taxon>Thermoanaerobacterales</taxon>
        <taxon>Thermoanaerobacteraceae</taxon>
        <taxon>Carboxydothermus</taxon>
    </lineage>
</organism>
<sequence>MSERLIVALDVSDKEKAMDIVEELKDVVSFFKVGMELFYREGPKLIDDLKNLGLKVFLDLKLHDIPNTVARALKNLIDLEVDMVNIHALGGKEMLRAAYLVKDEALKRKGKAPIILGVTVLTSMNQESLEQVGFKIKLSQLVAILAKETKEAGLDGVVASAQEVALIKSICGTEFITVTPGIRRFEDANFDQKRVLTPKKALELGADYLVVGRPIIAASNRRLAAQKYLEEMEGVLHGSL</sequence>
<evidence type="ECO:0000255" key="1">
    <source>
        <dbReference type="HAMAP-Rule" id="MF_01200"/>
    </source>
</evidence>
<gene>
    <name evidence="1" type="primary">pyrF</name>
    <name type="ordered locus">CHY_1496</name>
</gene>
<accession>Q3AC06</accession>
<keyword id="KW-0210">Decarboxylase</keyword>
<keyword id="KW-0456">Lyase</keyword>
<keyword id="KW-0665">Pyrimidine biosynthesis</keyword>
<keyword id="KW-1185">Reference proteome</keyword>
<name>PYRF_CARHZ</name>